<evidence type="ECO:0000250" key="1"/>
<evidence type="ECO:0000255" key="2"/>
<evidence type="ECO:0000305" key="3"/>
<comment type="function">
    <text evidence="1">Part of the ABC transporter complex LsrABCD involved in autoinducer 2 (AI-2) import. Binds AI-2 and delivers it to the LsrC and LsrD permeases (By similarity).</text>
</comment>
<comment type="subunit">
    <text evidence="1">The complex is composed of two ATP-binding proteins (LsrA), two transmembrane proteins (LsrC and LsrD) and a solute-binding protein (LsrB).</text>
</comment>
<comment type="subcellular location">
    <subcellularLocation>
        <location evidence="3">Periplasm</location>
    </subcellularLocation>
</comment>
<comment type="similarity">
    <text evidence="3">Belongs to the bacterial solute-binding protein 2 family.</text>
</comment>
<organism>
    <name type="scientific">Escherichia coli (strain K12 / DH10B)</name>
    <dbReference type="NCBI Taxonomy" id="316385"/>
    <lineage>
        <taxon>Bacteria</taxon>
        <taxon>Pseudomonadati</taxon>
        <taxon>Pseudomonadota</taxon>
        <taxon>Gammaproteobacteria</taxon>
        <taxon>Enterobacterales</taxon>
        <taxon>Enterobacteriaceae</taxon>
        <taxon>Escherichia</taxon>
    </lineage>
</organism>
<dbReference type="EMBL" id="CP000948">
    <property type="protein sequence ID" value="ACB02726.1"/>
    <property type="molecule type" value="Genomic_DNA"/>
</dbReference>
<dbReference type="RefSeq" id="WP_000172465.1">
    <property type="nucleotide sequence ID" value="NC_010473.1"/>
</dbReference>
<dbReference type="SMR" id="B1XEA4"/>
<dbReference type="KEGG" id="ecd:ECDH10B_1647"/>
<dbReference type="HOGENOM" id="CLU_037628_3_0_6"/>
<dbReference type="GO" id="GO:0043190">
    <property type="term" value="C:ATP-binding cassette (ABC) transporter complex"/>
    <property type="evidence" value="ECO:0007669"/>
    <property type="project" value="InterPro"/>
</dbReference>
<dbReference type="GO" id="GO:0030288">
    <property type="term" value="C:outer membrane-bounded periplasmic space"/>
    <property type="evidence" value="ECO:0007669"/>
    <property type="project" value="TreeGrafter"/>
</dbReference>
<dbReference type="GO" id="GO:0030246">
    <property type="term" value="F:carbohydrate binding"/>
    <property type="evidence" value="ECO:0007669"/>
    <property type="project" value="TreeGrafter"/>
</dbReference>
<dbReference type="GO" id="GO:0055085">
    <property type="term" value="P:transmembrane transport"/>
    <property type="evidence" value="ECO:0007669"/>
    <property type="project" value="UniProtKB-ARBA"/>
</dbReference>
<dbReference type="CDD" id="cd20003">
    <property type="entry name" value="PBP1_LsrB_Quorum_Sensing"/>
    <property type="match status" value="1"/>
</dbReference>
<dbReference type="Gene3D" id="3.40.50.2300">
    <property type="match status" value="2"/>
</dbReference>
<dbReference type="InterPro" id="IPR050555">
    <property type="entry name" value="Bact_Solute-Bind_Prot2"/>
</dbReference>
<dbReference type="InterPro" id="IPR030159">
    <property type="entry name" value="LsrB"/>
</dbReference>
<dbReference type="InterPro" id="IPR028082">
    <property type="entry name" value="Peripla_BP_I"/>
</dbReference>
<dbReference type="InterPro" id="IPR025997">
    <property type="entry name" value="SBP_2_dom"/>
</dbReference>
<dbReference type="NCBIfam" id="NF011937">
    <property type="entry name" value="PRK15408.1"/>
    <property type="match status" value="1"/>
</dbReference>
<dbReference type="PANTHER" id="PTHR30036:SF7">
    <property type="entry name" value="ABC TRANSPORTER PERIPLASMIC-BINDING PROTEIN YPHF"/>
    <property type="match status" value="1"/>
</dbReference>
<dbReference type="PANTHER" id="PTHR30036">
    <property type="entry name" value="D-XYLOSE-BINDING PERIPLASMIC PROTEIN"/>
    <property type="match status" value="1"/>
</dbReference>
<dbReference type="Pfam" id="PF13407">
    <property type="entry name" value="Peripla_BP_4"/>
    <property type="match status" value="1"/>
</dbReference>
<dbReference type="SUPFAM" id="SSF53822">
    <property type="entry name" value="Periplasmic binding protein-like I"/>
    <property type="match status" value="1"/>
</dbReference>
<proteinExistence type="inferred from homology"/>
<reference key="1">
    <citation type="journal article" date="2008" name="J. Bacteriol.">
        <title>The complete genome sequence of Escherichia coli DH10B: insights into the biology of a laboratory workhorse.</title>
        <authorList>
            <person name="Durfee T."/>
            <person name="Nelson R."/>
            <person name="Baldwin S."/>
            <person name="Plunkett G. III"/>
            <person name="Burland V."/>
            <person name="Mau B."/>
            <person name="Petrosino J.F."/>
            <person name="Qin X."/>
            <person name="Muzny D.M."/>
            <person name="Ayele M."/>
            <person name="Gibbs R.A."/>
            <person name="Csorgo B."/>
            <person name="Posfai G."/>
            <person name="Weinstock G.M."/>
            <person name="Blattner F.R."/>
        </authorList>
    </citation>
    <scope>NUCLEOTIDE SEQUENCE [LARGE SCALE GENOMIC DNA]</scope>
    <source>
        <strain>K12 / DH10B</strain>
    </source>
</reference>
<accession>B1XEA4</accession>
<keyword id="KW-0574">Periplasm</keyword>
<keyword id="KW-0732">Signal</keyword>
<gene>
    <name type="primary">lsrB</name>
    <name type="ordered locus">ECDH10B_1647</name>
</gene>
<feature type="signal peptide" evidence="2">
    <location>
        <begin position="1"/>
        <end position="26"/>
    </location>
</feature>
<feature type="chain" id="PRO_0000351317" description="Autoinducer 2-binding protein LsrB">
    <location>
        <begin position="27"/>
        <end position="340"/>
    </location>
</feature>
<sequence>MTLHRFKKIALLSALGIAAISMNVQAAERIAFIPKLVGVGFFTSGGNGAQQAGKELGVDVTYDGPTEPSVSGQVQLINNFVNQGYNAIIVSAVSPDGLCPALKRAMQRGVRVLTWDSDTKPECRSYYINQGTPAQLGGMLVDMAARQVNKDKAKVAFFYSSPTVTDQNQWVKEAKAKIAKEHPGWEIVTTQFGYNDATKSLQTAEGILKAYSDLDAIIAPDANALPAAAQAAENLKNDKVAIVGFSTPNVMRPYVERGTVKEFGLWDVVQQGKISVYVADALLKKGSMKTGDKLDIKGVGQVEVSPNSVQGYDYEADGNGIVLLPERVIFNKENIGKYDF</sequence>
<name>LSRB_ECODH</name>
<protein>
    <recommendedName>
        <fullName>Autoinducer 2-binding protein LsrB</fullName>
        <shortName>AI-2-binding protein LsrB</shortName>
    </recommendedName>
</protein>